<protein>
    <recommendedName>
        <fullName evidence="1">Large ribosomal subunit protein uL6</fullName>
    </recommendedName>
    <alternativeName>
        <fullName evidence="2">50S ribosomal protein L6</fullName>
    </alternativeName>
</protein>
<comment type="function">
    <text evidence="1">This protein binds to the 23S rRNA, and is important in its secondary structure. It is located near the subunit interface in the base of the L7/L12 stalk, and near the tRNA binding site of the peptidyltransferase center.</text>
</comment>
<comment type="subunit">
    <text evidence="1">Part of the 50S ribosomal subunit.</text>
</comment>
<comment type="similarity">
    <text evidence="1">Belongs to the universal ribosomal protein uL6 family.</text>
</comment>
<sequence length="179" mass="19369">MSRIGKLPIEIPKGVKISYIDSNLMVEGPKGSLGRRIMSGVSIDLTDNTITVSRDNDGIKSRSAHGLTRTLINNMVTGVTTGFETALEINGVGYRAELKGDVLNLSLGYSHPINFQLPKGINVEVDKMTKLLVKGIDKELVGQTAAKIRAFRGPEPYKGKGVKYANETILRKAGKTGKK</sequence>
<evidence type="ECO:0000255" key="1">
    <source>
        <dbReference type="HAMAP-Rule" id="MF_01365"/>
    </source>
</evidence>
<evidence type="ECO:0000305" key="2"/>
<name>RL6_GEOUR</name>
<keyword id="KW-1185">Reference proteome</keyword>
<keyword id="KW-0687">Ribonucleoprotein</keyword>
<keyword id="KW-0689">Ribosomal protein</keyword>
<keyword id="KW-0694">RNA-binding</keyword>
<keyword id="KW-0699">rRNA-binding</keyword>
<reference key="1">
    <citation type="submission" date="2007-05" db="EMBL/GenBank/DDBJ databases">
        <title>Complete sequence of Geobacter uraniireducens Rf4.</title>
        <authorList>
            <consortium name="US DOE Joint Genome Institute"/>
            <person name="Copeland A."/>
            <person name="Lucas S."/>
            <person name="Lapidus A."/>
            <person name="Barry K."/>
            <person name="Detter J.C."/>
            <person name="Glavina del Rio T."/>
            <person name="Hammon N."/>
            <person name="Israni S."/>
            <person name="Dalin E."/>
            <person name="Tice H."/>
            <person name="Pitluck S."/>
            <person name="Chertkov O."/>
            <person name="Brettin T."/>
            <person name="Bruce D."/>
            <person name="Han C."/>
            <person name="Schmutz J."/>
            <person name="Larimer F."/>
            <person name="Land M."/>
            <person name="Hauser L."/>
            <person name="Kyrpides N."/>
            <person name="Mikhailova N."/>
            <person name="Shelobolina E."/>
            <person name="Aklujkar M."/>
            <person name="Lovley D."/>
            <person name="Richardson P."/>
        </authorList>
    </citation>
    <scope>NUCLEOTIDE SEQUENCE [LARGE SCALE GENOMIC DNA]</scope>
    <source>
        <strain>ATCC BAA-1134 / JCM 13001 / Rf4</strain>
    </source>
</reference>
<dbReference type="EMBL" id="CP000698">
    <property type="protein sequence ID" value="ABQ25287.1"/>
    <property type="molecule type" value="Genomic_DNA"/>
</dbReference>
<dbReference type="RefSeq" id="WP_011938009.1">
    <property type="nucleotide sequence ID" value="NC_009483.1"/>
</dbReference>
<dbReference type="SMR" id="A5GAV7"/>
<dbReference type="STRING" id="351605.Gura_1081"/>
<dbReference type="KEGG" id="gur:Gura_1081"/>
<dbReference type="HOGENOM" id="CLU_065464_1_2_7"/>
<dbReference type="OrthoDB" id="9805007at2"/>
<dbReference type="Proteomes" id="UP000006695">
    <property type="component" value="Chromosome"/>
</dbReference>
<dbReference type="GO" id="GO:0022625">
    <property type="term" value="C:cytosolic large ribosomal subunit"/>
    <property type="evidence" value="ECO:0007669"/>
    <property type="project" value="TreeGrafter"/>
</dbReference>
<dbReference type="GO" id="GO:0019843">
    <property type="term" value="F:rRNA binding"/>
    <property type="evidence" value="ECO:0007669"/>
    <property type="project" value="UniProtKB-UniRule"/>
</dbReference>
<dbReference type="GO" id="GO:0003735">
    <property type="term" value="F:structural constituent of ribosome"/>
    <property type="evidence" value="ECO:0007669"/>
    <property type="project" value="InterPro"/>
</dbReference>
<dbReference type="GO" id="GO:0002181">
    <property type="term" value="P:cytoplasmic translation"/>
    <property type="evidence" value="ECO:0007669"/>
    <property type="project" value="TreeGrafter"/>
</dbReference>
<dbReference type="FunFam" id="3.90.930.12:FF:000001">
    <property type="entry name" value="50S ribosomal protein L6"/>
    <property type="match status" value="1"/>
</dbReference>
<dbReference type="FunFam" id="3.90.930.12:FF:000002">
    <property type="entry name" value="50S ribosomal protein L6"/>
    <property type="match status" value="1"/>
</dbReference>
<dbReference type="Gene3D" id="3.90.930.12">
    <property type="entry name" value="Ribosomal protein L6, alpha-beta domain"/>
    <property type="match status" value="2"/>
</dbReference>
<dbReference type="HAMAP" id="MF_01365_B">
    <property type="entry name" value="Ribosomal_uL6_B"/>
    <property type="match status" value="1"/>
</dbReference>
<dbReference type="InterPro" id="IPR000702">
    <property type="entry name" value="Ribosomal_uL6-like"/>
</dbReference>
<dbReference type="InterPro" id="IPR036789">
    <property type="entry name" value="Ribosomal_uL6-like_a/b-dom_sf"/>
</dbReference>
<dbReference type="InterPro" id="IPR020040">
    <property type="entry name" value="Ribosomal_uL6_a/b-dom"/>
</dbReference>
<dbReference type="InterPro" id="IPR019906">
    <property type="entry name" value="Ribosomal_uL6_bac-type"/>
</dbReference>
<dbReference type="InterPro" id="IPR002358">
    <property type="entry name" value="Ribosomal_uL6_CS"/>
</dbReference>
<dbReference type="NCBIfam" id="TIGR03654">
    <property type="entry name" value="L6_bact"/>
    <property type="match status" value="1"/>
</dbReference>
<dbReference type="PANTHER" id="PTHR11655">
    <property type="entry name" value="60S/50S RIBOSOMAL PROTEIN L6/L9"/>
    <property type="match status" value="1"/>
</dbReference>
<dbReference type="PANTHER" id="PTHR11655:SF14">
    <property type="entry name" value="LARGE RIBOSOMAL SUBUNIT PROTEIN UL6M"/>
    <property type="match status" value="1"/>
</dbReference>
<dbReference type="Pfam" id="PF00347">
    <property type="entry name" value="Ribosomal_L6"/>
    <property type="match status" value="2"/>
</dbReference>
<dbReference type="PIRSF" id="PIRSF002162">
    <property type="entry name" value="Ribosomal_L6"/>
    <property type="match status" value="1"/>
</dbReference>
<dbReference type="PRINTS" id="PR00059">
    <property type="entry name" value="RIBOSOMALL6"/>
</dbReference>
<dbReference type="SUPFAM" id="SSF56053">
    <property type="entry name" value="Ribosomal protein L6"/>
    <property type="match status" value="2"/>
</dbReference>
<dbReference type="PROSITE" id="PS00525">
    <property type="entry name" value="RIBOSOMAL_L6_1"/>
    <property type="match status" value="1"/>
</dbReference>
<gene>
    <name evidence="1" type="primary">rplF</name>
    <name type="ordered locus">Gura_1081</name>
</gene>
<proteinExistence type="inferred from homology"/>
<feature type="chain" id="PRO_1000087045" description="Large ribosomal subunit protein uL6">
    <location>
        <begin position="1"/>
        <end position="179"/>
    </location>
</feature>
<organism>
    <name type="scientific">Geotalea uraniireducens (strain Rf4)</name>
    <name type="common">Geobacter uraniireducens</name>
    <dbReference type="NCBI Taxonomy" id="351605"/>
    <lineage>
        <taxon>Bacteria</taxon>
        <taxon>Pseudomonadati</taxon>
        <taxon>Thermodesulfobacteriota</taxon>
        <taxon>Desulfuromonadia</taxon>
        <taxon>Geobacterales</taxon>
        <taxon>Geobacteraceae</taxon>
        <taxon>Geotalea</taxon>
    </lineage>
</organism>
<accession>A5GAV7</accession>